<accession>P0CM35</accession>
<accession>Q55JM5</accession>
<accession>Q5K9X6</accession>
<sequence length="385" mass="42799">MNNPLLAIQSQYWAVRDYLSPVLRESKFKEHGRITPEEFVAAGDFLTFKFPVWQWEKGESSRARDFLPPDKQYLVTRNVPCLRRATAVDYTNADEDAEKLLSFLDDAEEAPGPDDDWVATHINRSPPHRPTDMDEIPDIPDSPTTAPTREMAGLNVSSGGKLEEDEIPDIDDIPDMDEEGLEDLEDDAAVRIVHPSEAEVNSTAGKNLLQVRTYDCIISYDKHYQTPRFWLFGYDEHKNPLTPAQVFQDVPADHAFKTMTMESFPHSGAQLASVHPCKHASVMKKFIDRMEAAQGPAPTAEPETISSTSGTSGSAGGKEEKEKKKKWGLGSMVRKVTGGSVPKVEKDKDEVVTGVPVDFYLVIFLKFIASIVPTIEVDSTTSTAL</sequence>
<organism>
    <name type="scientific">Cryptococcus neoformans var. neoformans serotype D (strain B-3501A)</name>
    <name type="common">Filobasidiella neoformans</name>
    <dbReference type="NCBI Taxonomy" id="283643"/>
    <lineage>
        <taxon>Eukaryota</taxon>
        <taxon>Fungi</taxon>
        <taxon>Dikarya</taxon>
        <taxon>Basidiomycota</taxon>
        <taxon>Agaricomycotina</taxon>
        <taxon>Tremellomycetes</taxon>
        <taxon>Tremellales</taxon>
        <taxon>Cryptococcaceae</taxon>
        <taxon>Cryptococcus</taxon>
        <taxon>Cryptococcus neoformans species complex</taxon>
    </lineage>
</organism>
<name>ATG3_CRYNB</name>
<feature type="chain" id="PRO_0000410019" description="Autophagy-related protein 3">
    <location>
        <begin position="1"/>
        <end position="385"/>
    </location>
</feature>
<feature type="region of interest" description="Flexible region" evidence="1">
    <location>
        <begin position="88"/>
        <end position="208"/>
    </location>
</feature>
<feature type="region of interest" description="Disordered" evidence="2">
    <location>
        <begin position="126"/>
        <end position="169"/>
    </location>
</feature>
<feature type="region of interest" description="Handle region" evidence="1">
    <location>
        <begin position="281"/>
        <end position="359"/>
    </location>
</feature>
<feature type="region of interest" description="Disordered" evidence="2">
    <location>
        <begin position="292"/>
        <end position="329"/>
    </location>
</feature>
<feature type="compositionally biased region" description="Low complexity" evidence="2">
    <location>
        <begin position="303"/>
        <end position="312"/>
    </location>
</feature>
<feature type="active site" description="Glycyl thioester intermediate" evidence="1">
    <location>
        <position position="277"/>
    </location>
</feature>
<comment type="function">
    <text evidence="1">E2 conjugating enzyme required for the cytoplasm to vacuole transport (Cvt) and autophagy. Required for selective autophagic degradation of the nucleus (nucleophagy) as well as for mitophagy which contributes to regulate mitochondrial quantity and quality by eliminating the mitochondria to a basal level to fulfill cellular energy requirements and preventing excess ROS production. Responsible for the E2-like covalent binding of phosphatidylethanolamine to the C-terminal Gly of ATG8. The ATG12-ATG5 conjugate plays a role of an E3 and promotes the transfer of ATG8 from ATG3 to phosphatidylethanolamine (PE). This step is required for the membrane association of ATG8. The formation of the ATG8-phosphatidylethanolamine conjugate is essential for autophagy and for the cytoplasm to vacuole transport (Cvt). The ATG8-PE conjugate mediates tethering between adjacent membranes and stimulates membrane hemifusion, leading to expansion of the autophagosomal membrane during autophagy (By similarity).</text>
</comment>
<comment type="subunit">
    <text evidence="1">Monomer. Interacts with ATG8 through an intermediate thioester bond through the C-terminal Gly of ATG8. Also interacts with the 40 amino acid C-terminal region of the E1-like ATG7 enzyme. Also interacts with the ATG12-ATG5 conjugate.</text>
</comment>
<comment type="subcellular location">
    <subcellularLocation>
        <location evidence="1">Cytoplasm</location>
    </subcellularLocation>
</comment>
<comment type="domain">
    <text evidence="1">The N-terminal region is involved in phosphatidylethanolamine-binding and is required for ATG8-PE conjugation.</text>
</comment>
<comment type="domain">
    <text evidence="1">The flexible region (FR) is required for ATG7-binding.</text>
</comment>
<comment type="domain">
    <text evidence="1">The handle region (HR) contains the ATG8 interaction motif (AIM) and mediates binding to ATG8. It is crucial for the cytoplasm-to-vacuole targeting pathway (By similarity).</text>
</comment>
<comment type="similarity">
    <text evidence="3">Belongs to the ATG3 family.</text>
</comment>
<dbReference type="EMBL" id="AAEY01000053">
    <property type="protein sequence ID" value="EAL17957.1"/>
    <property type="molecule type" value="Genomic_DNA"/>
</dbReference>
<dbReference type="RefSeq" id="XP_772604.1">
    <property type="nucleotide sequence ID" value="XM_767511.1"/>
</dbReference>
<dbReference type="SMR" id="P0CM35"/>
<dbReference type="EnsemblFungi" id="AAW46088">
    <property type="protein sequence ID" value="AAW46088"/>
    <property type="gene ID" value="CNK00360"/>
</dbReference>
<dbReference type="GeneID" id="4939008"/>
<dbReference type="KEGG" id="cnb:CNBK3080"/>
<dbReference type="VEuPathDB" id="FungiDB:CNBK3080"/>
<dbReference type="HOGENOM" id="CLU_027518_2_0_1"/>
<dbReference type="OrthoDB" id="5239at5206"/>
<dbReference type="GO" id="GO:0005829">
    <property type="term" value="C:cytosol"/>
    <property type="evidence" value="ECO:0007669"/>
    <property type="project" value="TreeGrafter"/>
</dbReference>
<dbReference type="GO" id="GO:0000407">
    <property type="term" value="C:phagophore assembly site"/>
    <property type="evidence" value="ECO:0007669"/>
    <property type="project" value="TreeGrafter"/>
</dbReference>
<dbReference type="GO" id="GO:0019776">
    <property type="term" value="F:Atg8-family ligase activity"/>
    <property type="evidence" value="ECO:0007669"/>
    <property type="project" value="TreeGrafter"/>
</dbReference>
<dbReference type="GO" id="GO:0000045">
    <property type="term" value="P:autophagosome assembly"/>
    <property type="evidence" value="ECO:0007669"/>
    <property type="project" value="TreeGrafter"/>
</dbReference>
<dbReference type="GO" id="GO:0000422">
    <property type="term" value="P:autophagy of mitochondrion"/>
    <property type="evidence" value="ECO:0007669"/>
    <property type="project" value="TreeGrafter"/>
</dbReference>
<dbReference type="GO" id="GO:0061723">
    <property type="term" value="P:glycophagy"/>
    <property type="evidence" value="ECO:0007669"/>
    <property type="project" value="TreeGrafter"/>
</dbReference>
<dbReference type="GO" id="GO:0044804">
    <property type="term" value="P:nucleophagy"/>
    <property type="evidence" value="ECO:0007669"/>
    <property type="project" value="TreeGrafter"/>
</dbReference>
<dbReference type="GO" id="GO:0015031">
    <property type="term" value="P:protein transport"/>
    <property type="evidence" value="ECO:0007669"/>
    <property type="project" value="UniProtKB-KW"/>
</dbReference>
<dbReference type="InterPro" id="IPR007135">
    <property type="entry name" value="Atg3/Atg10"/>
</dbReference>
<dbReference type="PANTHER" id="PTHR12866">
    <property type="entry name" value="UBIQUITIN-LIKE-CONJUGATING ENZYME ATG3"/>
    <property type="match status" value="1"/>
</dbReference>
<dbReference type="PANTHER" id="PTHR12866:SF2">
    <property type="entry name" value="UBIQUITIN-LIKE-CONJUGATING ENZYME ATG3"/>
    <property type="match status" value="1"/>
</dbReference>
<dbReference type="Pfam" id="PF03987">
    <property type="entry name" value="Autophagy_act_C"/>
    <property type="match status" value="1"/>
</dbReference>
<keyword id="KW-0072">Autophagy</keyword>
<keyword id="KW-0963">Cytoplasm</keyword>
<keyword id="KW-0653">Protein transport</keyword>
<keyword id="KW-0813">Transport</keyword>
<keyword id="KW-0833">Ubl conjugation pathway</keyword>
<reference key="1">
    <citation type="journal article" date="2005" name="Science">
        <title>The genome of the basidiomycetous yeast and human pathogen Cryptococcus neoformans.</title>
        <authorList>
            <person name="Loftus B.J."/>
            <person name="Fung E."/>
            <person name="Roncaglia P."/>
            <person name="Rowley D."/>
            <person name="Amedeo P."/>
            <person name="Bruno D."/>
            <person name="Vamathevan J."/>
            <person name="Miranda M."/>
            <person name="Anderson I.J."/>
            <person name="Fraser J.A."/>
            <person name="Allen J.E."/>
            <person name="Bosdet I.E."/>
            <person name="Brent M.R."/>
            <person name="Chiu R."/>
            <person name="Doering T.L."/>
            <person name="Donlin M.J."/>
            <person name="D'Souza C.A."/>
            <person name="Fox D.S."/>
            <person name="Grinberg V."/>
            <person name="Fu J."/>
            <person name="Fukushima M."/>
            <person name="Haas B.J."/>
            <person name="Huang J.C."/>
            <person name="Janbon G."/>
            <person name="Jones S.J.M."/>
            <person name="Koo H.L."/>
            <person name="Krzywinski M.I."/>
            <person name="Kwon-Chung K.J."/>
            <person name="Lengeler K.B."/>
            <person name="Maiti R."/>
            <person name="Marra M.A."/>
            <person name="Marra R.E."/>
            <person name="Mathewson C.A."/>
            <person name="Mitchell T.G."/>
            <person name="Pertea M."/>
            <person name="Riggs F.R."/>
            <person name="Salzberg S.L."/>
            <person name="Schein J.E."/>
            <person name="Shvartsbeyn A."/>
            <person name="Shin H."/>
            <person name="Shumway M."/>
            <person name="Specht C.A."/>
            <person name="Suh B.B."/>
            <person name="Tenney A."/>
            <person name="Utterback T.R."/>
            <person name="Wickes B.L."/>
            <person name="Wortman J.R."/>
            <person name="Wye N.H."/>
            <person name="Kronstad J.W."/>
            <person name="Lodge J.K."/>
            <person name="Heitman J."/>
            <person name="Davis R.W."/>
            <person name="Fraser C.M."/>
            <person name="Hyman R.W."/>
        </authorList>
    </citation>
    <scope>NUCLEOTIDE SEQUENCE [LARGE SCALE GENOMIC DNA]</scope>
    <source>
        <strain>B-3501A</strain>
    </source>
</reference>
<proteinExistence type="inferred from homology"/>
<evidence type="ECO:0000250" key="1"/>
<evidence type="ECO:0000256" key="2">
    <source>
        <dbReference type="SAM" id="MobiDB-lite"/>
    </source>
</evidence>
<evidence type="ECO:0000305" key="3"/>
<gene>
    <name type="primary">ATG3</name>
    <name type="ordered locus">CNBK3080</name>
</gene>
<protein>
    <recommendedName>
        <fullName>Autophagy-related protein 3</fullName>
    </recommendedName>
    <alternativeName>
        <fullName>Autophagy-related E2-like conjugation enzyme ATG3</fullName>
    </alternativeName>
</protein>